<gene>
    <name evidence="1" type="primary">atpD</name>
    <name type="ordered locus">Sputw3181_4053</name>
</gene>
<feature type="chain" id="PRO_1000055166" description="ATP synthase subunit beta">
    <location>
        <begin position="1"/>
        <end position="463"/>
    </location>
</feature>
<feature type="binding site" evidence="1">
    <location>
        <begin position="152"/>
        <end position="159"/>
    </location>
    <ligand>
        <name>ATP</name>
        <dbReference type="ChEBI" id="CHEBI:30616"/>
    </ligand>
</feature>
<organism>
    <name type="scientific">Shewanella sp. (strain W3-18-1)</name>
    <dbReference type="NCBI Taxonomy" id="351745"/>
    <lineage>
        <taxon>Bacteria</taxon>
        <taxon>Pseudomonadati</taxon>
        <taxon>Pseudomonadota</taxon>
        <taxon>Gammaproteobacteria</taxon>
        <taxon>Alteromonadales</taxon>
        <taxon>Shewanellaceae</taxon>
        <taxon>Shewanella</taxon>
    </lineage>
</organism>
<keyword id="KW-0066">ATP synthesis</keyword>
<keyword id="KW-0067">ATP-binding</keyword>
<keyword id="KW-0997">Cell inner membrane</keyword>
<keyword id="KW-1003">Cell membrane</keyword>
<keyword id="KW-0139">CF(1)</keyword>
<keyword id="KW-0375">Hydrogen ion transport</keyword>
<keyword id="KW-0406">Ion transport</keyword>
<keyword id="KW-0472">Membrane</keyword>
<keyword id="KW-0547">Nucleotide-binding</keyword>
<keyword id="KW-1278">Translocase</keyword>
<keyword id="KW-0813">Transport</keyword>
<name>ATPB_SHESW</name>
<dbReference type="EC" id="7.1.2.2" evidence="1"/>
<dbReference type="EMBL" id="CP000503">
    <property type="protein sequence ID" value="ABM26855.1"/>
    <property type="molecule type" value="Genomic_DNA"/>
</dbReference>
<dbReference type="RefSeq" id="WP_011791276.1">
    <property type="nucleotide sequence ID" value="NC_008750.1"/>
</dbReference>
<dbReference type="SMR" id="A1RQB0"/>
<dbReference type="KEGG" id="shw:Sputw3181_4053"/>
<dbReference type="HOGENOM" id="CLU_022398_0_2_6"/>
<dbReference type="Proteomes" id="UP000002597">
    <property type="component" value="Chromosome"/>
</dbReference>
<dbReference type="GO" id="GO:0005886">
    <property type="term" value="C:plasma membrane"/>
    <property type="evidence" value="ECO:0007669"/>
    <property type="project" value="UniProtKB-SubCell"/>
</dbReference>
<dbReference type="GO" id="GO:0045259">
    <property type="term" value="C:proton-transporting ATP synthase complex"/>
    <property type="evidence" value="ECO:0007669"/>
    <property type="project" value="UniProtKB-KW"/>
</dbReference>
<dbReference type="GO" id="GO:0005524">
    <property type="term" value="F:ATP binding"/>
    <property type="evidence" value="ECO:0007669"/>
    <property type="project" value="UniProtKB-UniRule"/>
</dbReference>
<dbReference type="GO" id="GO:0016887">
    <property type="term" value="F:ATP hydrolysis activity"/>
    <property type="evidence" value="ECO:0007669"/>
    <property type="project" value="InterPro"/>
</dbReference>
<dbReference type="GO" id="GO:0046933">
    <property type="term" value="F:proton-transporting ATP synthase activity, rotational mechanism"/>
    <property type="evidence" value="ECO:0007669"/>
    <property type="project" value="UniProtKB-UniRule"/>
</dbReference>
<dbReference type="CDD" id="cd18110">
    <property type="entry name" value="ATP-synt_F1_beta_C"/>
    <property type="match status" value="1"/>
</dbReference>
<dbReference type="CDD" id="cd18115">
    <property type="entry name" value="ATP-synt_F1_beta_N"/>
    <property type="match status" value="1"/>
</dbReference>
<dbReference type="CDD" id="cd01133">
    <property type="entry name" value="F1-ATPase_beta_CD"/>
    <property type="match status" value="1"/>
</dbReference>
<dbReference type="FunFam" id="1.10.1140.10:FF:000001">
    <property type="entry name" value="ATP synthase subunit beta"/>
    <property type="match status" value="1"/>
</dbReference>
<dbReference type="FunFam" id="2.40.10.170:FF:000003">
    <property type="entry name" value="ATP synthase subunit beta"/>
    <property type="match status" value="1"/>
</dbReference>
<dbReference type="FunFam" id="3.40.50.300:FF:000004">
    <property type="entry name" value="ATP synthase subunit beta"/>
    <property type="match status" value="1"/>
</dbReference>
<dbReference type="Gene3D" id="2.40.10.170">
    <property type="match status" value="1"/>
</dbReference>
<dbReference type="Gene3D" id="1.10.1140.10">
    <property type="entry name" value="Bovine Mitochondrial F1-atpase, Atp Synthase Beta Chain, Chain D, domain 3"/>
    <property type="match status" value="1"/>
</dbReference>
<dbReference type="Gene3D" id="3.40.50.300">
    <property type="entry name" value="P-loop containing nucleotide triphosphate hydrolases"/>
    <property type="match status" value="1"/>
</dbReference>
<dbReference type="HAMAP" id="MF_01347">
    <property type="entry name" value="ATP_synth_beta_bact"/>
    <property type="match status" value="1"/>
</dbReference>
<dbReference type="InterPro" id="IPR003593">
    <property type="entry name" value="AAA+_ATPase"/>
</dbReference>
<dbReference type="InterPro" id="IPR055190">
    <property type="entry name" value="ATP-synt_VA_C"/>
</dbReference>
<dbReference type="InterPro" id="IPR005722">
    <property type="entry name" value="ATP_synth_F1_bsu"/>
</dbReference>
<dbReference type="InterPro" id="IPR020003">
    <property type="entry name" value="ATPase_a/bsu_AS"/>
</dbReference>
<dbReference type="InterPro" id="IPR050053">
    <property type="entry name" value="ATPase_alpha/beta_chains"/>
</dbReference>
<dbReference type="InterPro" id="IPR004100">
    <property type="entry name" value="ATPase_F1/V1/A1_a/bsu_N"/>
</dbReference>
<dbReference type="InterPro" id="IPR036121">
    <property type="entry name" value="ATPase_F1/V1/A1_a/bsu_N_sf"/>
</dbReference>
<dbReference type="InterPro" id="IPR000194">
    <property type="entry name" value="ATPase_F1/V1/A1_a/bsu_nucl-bd"/>
</dbReference>
<dbReference type="InterPro" id="IPR024034">
    <property type="entry name" value="ATPase_F1/V1_b/a_C"/>
</dbReference>
<dbReference type="InterPro" id="IPR027417">
    <property type="entry name" value="P-loop_NTPase"/>
</dbReference>
<dbReference type="NCBIfam" id="TIGR01039">
    <property type="entry name" value="atpD"/>
    <property type="match status" value="1"/>
</dbReference>
<dbReference type="PANTHER" id="PTHR15184">
    <property type="entry name" value="ATP SYNTHASE"/>
    <property type="match status" value="1"/>
</dbReference>
<dbReference type="PANTHER" id="PTHR15184:SF71">
    <property type="entry name" value="ATP SYNTHASE SUBUNIT BETA, MITOCHONDRIAL"/>
    <property type="match status" value="1"/>
</dbReference>
<dbReference type="Pfam" id="PF00006">
    <property type="entry name" value="ATP-synt_ab"/>
    <property type="match status" value="1"/>
</dbReference>
<dbReference type="Pfam" id="PF02874">
    <property type="entry name" value="ATP-synt_ab_N"/>
    <property type="match status" value="1"/>
</dbReference>
<dbReference type="Pfam" id="PF22919">
    <property type="entry name" value="ATP-synt_VA_C"/>
    <property type="match status" value="1"/>
</dbReference>
<dbReference type="SMART" id="SM00382">
    <property type="entry name" value="AAA"/>
    <property type="match status" value="1"/>
</dbReference>
<dbReference type="SUPFAM" id="SSF47917">
    <property type="entry name" value="C-terminal domain of alpha and beta subunits of F1 ATP synthase"/>
    <property type="match status" value="1"/>
</dbReference>
<dbReference type="SUPFAM" id="SSF50615">
    <property type="entry name" value="N-terminal domain of alpha and beta subunits of F1 ATP synthase"/>
    <property type="match status" value="1"/>
</dbReference>
<dbReference type="SUPFAM" id="SSF52540">
    <property type="entry name" value="P-loop containing nucleoside triphosphate hydrolases"/>
    <property type="match status" value="1"/>
</dbReference>
<dbReference type="PROSITE" id="PS00152">
    <property type="entry name" value="ATPASE_ALPHA_BETA"/>
    <property type="match status" value="1"/>
</dbReference>
<evidence type="ECO:0000255" key="1">
    <source>
        <dbReference type="HAMAP-Rule" id="MF_01347"/>
    </source>
</evidence>
<comment type="function">
    <text evidence="1">Produces ATP from ADP in the presence of a proton gradient across the membrane. The catalytic sites are hosted primarily by the beta subunits.</text>
</comment>
<comment type="catalytic activity">
    <reaction evidence="1">
        <text>ATP + H2O + 4 H(+)(in) = ADP + phosphate + 5 H(+)(out)</text>
        <dbReference type="Rhea" id="RHEA:57720"/>
        <dbReference type="ChEBI" id="CHEBI:15377"/>
        <dbReference type="ChEBI" id="CHEBI:15378"/>
        <dbReference type="ChEBI" id="CHEBI:30616"/>
        <dbReference type="ChEBI" id="CHEBI:43474"/>
        <dbReference type="ChEBI" id="CHEBI:456216"/>
        <dbReference type="EC" id="7.1.2.2"/>
    </reaction>
</comment>
<comment type="subunit">
    <text evidence="1">F-type ATPases have 2 components, CF(1) - the catalytic core - and CF(0) - the membrane proton channel. CF(1) has five subunits: alpha(3), beta(3), gamma(1), delta(1), epsilon(1). CF(0) has three main subunits: a(1), b(2) and c(9-12). The alpha and beta chains form an alternating ring which encloses part of the gamma chain. CF(1) is attached to CF(0) by a central stalk formed by the gamma and epsilon chains, while a peripheral stalk is formed by the delta and b chains.</text>
</comment>
<comment type="subcellular location">
    <subcellularLocation>
        <location evidence="1">Cell inner membrane</location>
        <topology evidence="1">Peripheral membrane protein</topology>
    </subcellularLocation>
</comment>
<comment type="similarity">
    <text evidence="1">Belongs to the ATPase alpha/beta chains family.</text>
</comment>
<reference key="1">
    <citation type="submission" date="2006-12" db="EMBL/GenBank/DDBJ databases">
        <title>Complete sequence of Shewanella sp. W3-18-1.</title>
        <authorList>
            <consortium name="US DOE Joint Genome Institute"/>
            <person name="Copeland A."/>
            <person name="Lucas S."/>
            <person name="Lapidus A."/>
            <person name="Barry K."/>
            <person name="Detter J.C."/>
            <person name="Glavina del Rio T."/>
            <person name="Hammon N."/>
            <person name="Israni S."/>
            <person name="Dalin E."/>
            <person name="Tice H."/>
            <person name="Pitluck S."/>
            <person name="Chain P."/>
            <person name="Malfatti S."/>
            <person name="Shin M."/>
            <person name="Vergez L."/>
            <person name="Schmutz J."/>
            <person name="Larimer F."/>
            <person name="Land M."/>
            <person name="Hauser L."/>
            <person name="Kyrpides N."/>
            <person name="Lykidis A."/>
            <person name="Tiedje J."/>
            <person name="Richardson P."/>
        </authorList>
    </citation>
    <scope>NUCLEOTIDE SEQUENCE [LARGE SCALE GENOMIC DNA]</scope>
    <source>
        <strain>W3-18-1</strain>
    </source>
</reference>
<protein>
    <recommendedName>
        <fullName evidence="1">ATP synthase subunit beta</fullName>
        <ecNumber evidence="1">7.1.2.2</ecNumber>
    </recommendedName>
    <alternativeName>
        <fullName evidence="1">ATP synthase F1 sector subunit beta</fullName>
    </alternativeName>
    <alternativeName>
        <fullName evidence="1">F-ATPase subunit beta</fullName>
    </alternativeName>
</protein>
<accession>A1RQB0</accession>
<sequence length="463" mass="49865">MSTGTVVQVIGAVVDVEFPQDAVPQVYDALKITGEGACNGLVLEVQQQLGGGVVRTIAMGSSDGLRRGLEVVNSGSPISVPVGTATLGRIMNVLGEPIDEAGPIGEEERYVIHRAAPSYEDQSNTTELLETGIKVIDLVCPFAKGGKVGLFGGAGVGKTVNMMELINNIAKAHSGLSVFAGVGERTREGNDFYYEMKDSGVLDKVAMVYGQMNEPPGNRLRVALSGLTMAEKFRDEGRDVLLFVDNIYRYTLAGTEVSALLGRMPSAVGYQPTLAEEMGVLQERITSTKTGSITSVQAVYVPADDLTDPSPATTFAHLDATVVLSRQIASLGIYPAVDPLDSTSRQLDPLVVGQEHYDVANGVQTVLQRYKELKDIIAILGMDELSDDDKTTVFRARKIERFLSQPFFVAEVFTGSPGKYVSLKDTIRGFKGILNGEFDHLPEQAFYMVGSIDEVIEKANKKK</sequence>
<proteinExistence type="inferred from homology"/>